<accession>B6I233</accession>
<protein>
    <recommendedName>
        <fullName evidence="1">Large ribosomal subunit protein uL4</fullName>
    </recommendedName>
    <alternativeName>
        <fullName evidence="3">50S ribosomal protein L4</fullName>
    </alternativeName>
</protein>
<feature type="chain" id="PRO_1000142123" description="Large ribosomal subunit protein uL4">
    <location>
        <begin position="1"/>
        <end position="201"/>
    </location>
</feature>
<feature type="region of interest" description="Disordered" evidence="2">
    <location>
        <begin position="44"/>
        <end position="71"/>
    </location>
</feature>
<sequence length="201" mass="22087">MELVLKDAQSALTVSETTFGRDFNEALVHQVVVAYAAGARQGTRAQKTRAEVTGSGKKPWRQKGTGRARSGSIKSPIWRSGGVTFAARPQDHSQKVNKKMYRGALKSILSELVRQDRLIVVEKFSVEAPKTKLLAQKLKDMALEDVLIITGELDENLFLAARNLHKVDVRDATGIDPVSLIAFDKVVMTADAVKQVEEMLA</sequence>
<evidence type="ECO:0000255" key="1">
    <source>
        <dbReference type="HAMAP-Rule" id="MF_01328"/>
    </source>
</evidence>
<evidence type="ECO:0000256" key="2">
    <source>
        <dbReference type="SAM" id="MobiDB-lite"/>
    </source>
</evidence>
<evidence type="ECO:0000305" key="3"/>
<name>RL4_ECOSE</name>
<dbReference type="EMBL" id="AP009240">
    <property type="protein sequence ID" value="BAG79118.1"/>
    <property type="molecule type" value="Genomic_DNA"/>
</dbReference>
<dbReference type="RefSeq" id="WP_000424395.1">
    <property type="nucleotide sequence ID" value="NC_011415.1"/>
</dbReference>
<dbReference type="SMR" id="B6I233"/>
<dbReference type="GeneID" id="97442859"/>
<dbReference type="KEGG" id="ecy:ECSE_3594"/>
<dbReference type="HOGENOM" id="CLU_041575_5_2_6"/>
<dbReference type="Proteomes" id="UP000008199">
    <property type="component" value="Chromosome"/>
</dbReference>
<dbReference type="GO" id="GO:1990904">
    <property type="term" value="C:ribonucleoprotein complex"/>
    <property type="evidence" value="ECO:0007669"/>
    <property type="project" value="UniProtKB-KW"/>
</dbReference>
<dbReference type="GO" id="GO:0005840">
    <property type="term" value="C:ribosome"/>
    <property type="evidence" value="ECO:0007669"/>
    <property type="project" value="UniProtKB-KW"/>
</dbReference>
<dbReference type="GO" id="GO:0019843">
    <property type="term" value="F:rRNA binding"/>
    <property type="evidence" value="ECO:0007669"/>
    <property type="project" value="UniProtKB-UniRule"/>
</dbReference>
<dbReference type="GO" id="GO:0003735">
    <property type="term" value="F:structural constituent of ribosome"/>
    <property type="evidence" value="ECO:0007669"/>
    <property type="project" value="InterPro"/>
</dbReference>
<dbReference type="GO" id="GO:0006412">
    <property type="term" value="P:translation"/>
    <property type="evidence" value="ECO:0007669"/>
    <property type="project" value="UniProtKB-UniRule"/>
</dbReference>
<dbReference type="FunFam" id="3.40.1370.10:FF:000001">
    <property type="entry name" value="50S ribosomal protein L4"/>
    <property type="match status" value="1"/>
</dbReference>
<dbReference type="Gene3D" id="3.40.1370.10">
    <property type="match status" value="1"/>
</dbReference>
<dbReference type="HAMAP" id="MF_01328_B">
    <property type="entry name" value="Ribosomal_uL4_B"/>
    <property type="match status" value="1"/>
</dbReference>
<dbReference type="InterPro" id="IPR002136">
    <property type="entry name" value="Ribosomal_uL4"/>
</dbReference>
<dbReference type="InterPro" id="IPR013005">
    <property type="entry name" value="Ribosomal_uL4-like"/>
</dbReference>
<dbReference type="InterPro" id="IPR023574">
    <property type="entry name" value="Ribosomal_uL4_dom_sf"/>
</dbReference>
<dbReference type="NCBIfam" id="TIGR03953">
    <property type="entry name" value="rplD_bact"/>
    <property type="match status" value="1"/>
</dbReference>
<dbReference type="PANTHER" id="PTHR10746">
    <property type="entry name" value="50S RIBOSOMAL PROTEIN L4"/>
    <property type="match status" value="1"/>
</dbReference>
<dbReference type="PANTHER" id="PTHR10746:SF6">
    <property type="entry name" value="LARGE RIBOSOMAL SUBUNIT PROTEIN UL4M"/>
    <property type="match status" value="1"/>
</dbReference>
<dbReference type="Pfam" id="PF00573">
    <property type="entry name" value="Ribosomal_L4"/>
    <property type="match status" value="1"/>
</dbReference>
<dbReference type="SUPFAM" id="SSF52166">
    <property type="entry name" value="Ribosomal protein L4"/>
    <property type="match status" value="1"/>
</dbReference>
<proteinExistence type="inferred from homology"/>
<gene>
    <name evidence="1" type="primary">rplD</name>
    <name type="ordered locus">ECSE_3594</name>
</gene>
<comment type="function">
    <text evidence="1">One of the primary rRNA binding proteins, this protein initially binds near the 5'-end of the 23S rRNA. It is important during the early stages of 50S assembly. It makes multiple contacts with different domains of the 23S rRNA in the assembled 50S subunit and ribosome.</text>
</comment>
<comment type="function">
    <text evidence="1">Forms part of the polypeptide exit tunnel.</text>
</comment>
<comment type="subunit">
    <text evidence="1">Part of the 50S ribosomal subunit.</text>
</comment>
<comment type="similarity">
    <text evidence="1">Belongs to the universal ribosomal protein uL4 family.</text>
</comment>
<keyword id="KW-0687">Ribonucleoprotein</keyword>
<keyword id="KW-0689">Ribosomal protein</keyword>
<keyword id="KW-0694">RNA-binding</keyword>
<keyword id="KW-0699">rRNA-binding</keyword>
<organism>
    <name type="scientific">Escherichia coli (strain SE11)</name>
    <dbReference type="NCBI Taxonomy" id="409438"/>
    <lineage>
        <taxon>Bacteria</taxon>
        <taxon>Pseudomonadati</taxon>
        <taxon>Pseudomonadota</taxon>
        <taxon>Gammaproteobacteria</taxon>
        <taxon>Enterobacterales</taxon>
        <taxon>Enterobacteriaceae</taxon>
        <taxon>Escherichia</taxon>
    </lineage>
</organism>
<reference key="1">
    <citation type="journal article" date="2008" name="DNA Res.">
        <title>Complete genome sequence and comparative analysis of the wild-type commensal Escherichia coli strain SE11 isolated from a healthy adult.</title>
        <authorList>
            <person name="Oshima K."/>
            <person name="Toh H."/>
            <person name="Ogura Y."/>
            <person name="Sasamoto H."/>
            <person name="Morita H."/>
            <person name="Park S.-H."/>
            <person name="Ooka T."/>
            <person name="Iyoda S."/>
            <person name="Taylor T.D."/>
            <person name="Hayashi T."/>
            <person name="Itoh K."/>
            <person name="Hattori M."/>
        </authorList>
    </citation>
    <scope>NUCLEOTIDE SEQUENCE [LARGE SCALE GENOMIC DNA]</scope>
    <source>
        <strain>SE11</strain>
    </source>
</reference>